<keyword id="KW-1003">Cell membrane</keyword>
<keyword id="KW-0319">Glycerol metabolism</keyword>
<keyword id="KW-0472">Membrane</keyword>
<keyword id="KW-0677">Repeat</keyword>
<keyword id="KW-0812">Transmembrane</keyword>
<keyword id="KW-1133">Transmembrane helix</keyword>
<keyword id="KW-0813">Transport</keyword>
<protein>
    <recommendedName>
        <fullName>Glycerol facilitator-aquaporin gla</fullName>
    </recommendedName>
    <alternativeName>
        <fullName>Aquaglyceroporin</fullName>
    </alternativeName>
    <alternativeName>
        <fullName>Glyceroaquaporin</fullName>
    </alternativeName>
</protein>
<reference key="1">
    <citation type="journal article" date="1991" name="Appl. Environ. Microbiol.">
        <title>Molecular cloning and sequence analysis of the X-prolyl dipeptidyl aminopeptidase gene from Lactococcus lactis subsp. cremoris.</title>
        <authorList>
            <person name="Mayo B."/>
            <person name="Kok J."/>
            <person name="Venema K."/>
            <person name="Bockelmann W."/>
            <person name="Teuber M."/>
            <person name="Reinke H."/>
            <person name="Venema G."/>
        </authorList>
    </citation>
    <scope>NUCLEOTIDE SEQUENCE [GENOMIC DNA]</scope>
    <source>
        <strain>P8-2-47</strain>
    </source>
</reference>
<reference key="2">
    <citation type="journal article" date="1991" name="Appl. Environ. Microbiol.">
        <title>Cloning and DNA sequence analysis of an X-prolyl dipeptidyl aminopeptidase gene from Lactococcus lactis subsp. lactis NCDO 763.</title>
        <authorList>
            <person name="Nardi M."/>
            <person name="Chopin M.-C."/>
            <person name="Chopin A."/>
            <person name="Cals M.M."/>
            <person name="Gripon J.-C."/>
        </authorList>
    </citation>
    <scope>NUCLEOTIDE SEQUENCE [GENOMIC DNA]</scope>
    <source>
        <strain>NCDO 763 / ML3</strain>
    </source>
</reference>
<reference key="3">
    <citation type="journal article" date="2001" name="Microbiology">
        <title>Functional characterization of a microbial aquaglyceroporin.</title>
        <authorList>
            <person name="Froger A."/>
            <person name="Rolland J.-P."/>
            <person name="Bron P."/>
            <person name="Lagree V."/>
            <person name="Le Caherec F."/>
            <person name="Deschamps S."/>
            <person name="Hubert J.-F."/>
            <person name="Pellerin I."/>
            <person name="Thomas D."/>
            <person name="Delamarche C."/>
        </authorList>
    </citation>
    <scope>CHARACTERIZATION</scope>
    <source>
        <strain>NCDO 763 / ML3</strain>
    </source>
</reference>
<accession>P22094</accession>
<gene>
    <name type="primary">gla</name>
</gene>
<name>GLA_LACLC</name>
<organism>
    <name type="scientific">Lactococcus lactis subsp. cremoris</name>
    <name type="common">Streptococcus cremoris</name>
    <dbReference type="NCBI Taxonomy" id="1359"/>
    <lineage>
        <taxon>Bacteria</taxon>
        <taxon>Bacillati</taxon>
        <taxon>Bacillota</taxon>
        <taxon>Bacilli</taxon>
        <taxon>Lactobacillales</taxon>
        <taxon>Streptococcaceae</taxon>
        <taxon>Lactococcus</taxon>
    </lineage>
</organism>
<dbReference type="EMBL" id="M58315">
    <property type="protein sequence ID" value="AAA25231.1"/>
    <property type="molecule type" value="Genomic_DNA"/>
</dbReference>
<dbReference type="EMBL" id="M35865">
    <property type="protein sequence ID" value="AAA25206.1"/>
    <property type="molecule type" value="Genomic_DNA"/>
</dbReference>
<dbReference type="PIR" id="B43747">
    <property type="entry name" value="B43747"/>
</dbReference>
<dbReference type="PIR" id="B43748">
    <property type="entry name" value="B43748"/>
</dbReference>
<dbReference type="RefSeq" id="WP_011677122.1">
    <property type="nucleotide sequence ID" value="NZ_WJUX01000052.1"/>
</dbReference>
<dbReference type="SMR" id="P22094"/>
<dbReference type="TCDB" id="1.A.8.2.2">
    <property type="family name" value="the major intrinsic protein (mip) family"/>
</dbReference>
<dbReference type="GeneID" id="61110371"/>
<dbReference type="OMA" id="CALGRMP"/>
<dbReference type="GO" id="GO:0005886">
    <property type="term" value="C:plasma membrane"/>
    <property type="evidence" value="ECO:0007669"/>
    <property type="project" value="UniProtKB-SubCell"/>
</dbReference>
<dbReference type="GO" id="GO:0015254">
    <property type="term" value="F:glycerol channel activity"/>
    <property type="evidence" value="ECO:0007669"/>
    <property type="project" value="TreeGrafter"/>
</dbReference>
<dbReference type="GO" id="GO:0006071">
    <property type="term" value="P:glycerol metabolic process"/>
    <property type="evidence" value="ECO:0007669"/>
    <property type="project" value="UniProtKB-KW"/>
</dbReference>
<dbReference type="CDD" id="cd00333">
    <property type="entry name" value="MIP"/>
    <property type="match status" value="1"/>
</dbReference>
<dbReference type="Gene3D" id="1.20.1080.10">
    <property type="entry name" value="Glycerol uptake facilitator protein"/>
    <property type="match status" value="1"/>
</dbReference>
<dbReference type="InterPro" id="IPR023271">
    <property type="entry name" value="Aquaporin-like"/>
</dbReference>
<dbReference type="InterPro" id="IPR054631">
    <property type="entry name" value="Gla"/>
</dbReference>
<dbReference type="InterPro" id="IPR000425">
    <property type="entry name" value="MIP"/>
</dbReference>
<dbReference type="InterPro" id="IPR050363">
    <property type="entry name" value="MIP/Aquaporin"/>
</dbReference>
<dbReference type="InterPro" id="IPR022357">
    <property type="entry name" value="MIP_CS"/>
</dbReference>
<dbReference type="NCBIfam" id="NF045553">
    <property type="entry name" value="AquGlycerPorinGla"/>
    <property type="match status" value="1"/>
</dbReference>
<dbReference type="PANTHER" id="PTHR43829">
    <property type="entry name" value="AQUAPORIN OR AQUAGLYCEROPORIN RELATED"/>
    <property type="match status" value="1"/>
</dbReference>
<dbReference type="PANTHER" id="PTHR43829:SF9">
    <property type="entry name" value="AQUAPORIN-9"/>
    <property type="match status" value="1"/>
</dbReference>
<dbReference type="Pfam" id="PF00230">
    <property type="entry name" value="MIP"/>
    <property type="match status" value="2"/>
</dbReference>
<dbReference type="PRINTS" id="PR00783">
    <property type="entry name" value="MINTRINSICP"/>
</dbReference>
<dbReference type="SUPFAM" id="SSF81338">
    <property type="entry name" value="Aquaporin-like"/>
    <property type="match status" value="1"/>
</dbReference>
<dbReference type="PROSITE" id="PS00221">
    <property type="entry name" value="MIP"/>
    <property type="match status" value="1"/>
</dbReference>
<comment type="function">
    <text>Mixed channel protein that transports both water and glycerol.</text>
</comment>
<comment type="subcellular location">
    <subcellularLocation>
        <location>Cell membrane</location>
        <topology>Multi-pass membrane protein</topology>
    </subcellularLocation>
</comment>
<comment type="domain">
    <text>Aquaporins contain two tandem repeats each containing three membrane-spanning domains and a pore-forming loop with the signature motif Asn-Pro-Ala (NPA).</text>
</comment>
<comment type="similarity">
    <text evidence="2">Belongs to the MIP/aquaporin (TC 1.A.8) family.</text>
</comment>
<feature type="chain" id="PRO_0000064094" description="Glycerol facilitator-aquaporin gla">
    <location>
        <begin position="1"/>
        <end position="289"/>
    </location>
</feature>
<feature type="transmembrane region" description="Helical" evidence="1">
    <location>
        <begin position="10"/>
        <end position="30"/>
    </location>
</feature>
<feature type="transmembrane region" description="Helical" evidence="1">
    <location>
        <begin position="41"/>
        <end position="61"/>
    </location>
</feature>
<feature type="transmembrane region" description="Helical" evidence="1">
    <location>
        <begin position="87"/>
        <end position="107"/>
    </location>
</feature>
<feature type="transmembrane region" description="Helical" evidence="1">
    <location>
        <begin position="151"/>
        <end position="171"/>
    </location>
</feature>
<feature type="transmembrane region" description="Helical" evidence="1">
    <location>
        <begin position="209"/>
        <end position="229"/>
    </location>
</feature>
<feature type="transmembrane region" description="Helical" evidence="1">
    <location>
        <begin position="264"/>
        <end position="284"/>
    </location>
</feature>
<feature type="short sequence motif" description="NPA 1">
    <location>
        <begin position="68"/>
        <end position="70"/>
    </location>
</feature>
<feature type="short sequence motif" description="NPA 2">
    <location>
        <begin position="235"/>
        <end position="237"/>
    </location>
</feature>
<evidence type="ECO:0000255" key="1"/>
<evidence type="ECO:0000305" key="2"/>
<proteinExistence type="evidence at protein level"/>
<sequence>MDVTWTVKYITEFVGTALLIIMGNGAVANVELKGTKAHAQSWMIIGWGYGLGVMLPAVAFGNITSQINPAFTLGLAASGLFPWAHVAQYIIAQVLGAMFGQLLIVMVYRPYYLKTQNPNAILGTFSTIDNVDDNSEKTRLGATINGFLNEFLGSFVLFFGAVAATNIFFGSQSITWMTNYLKGQGADVSSSDVMNQIWVQASGASASKMIAHLFLGFLVMGLVVALGGPTGPGLNPARDFGPRLVHSLLPKSVLGEAKGSSKWWYAWVPVLAPILASLAAVALFKMIYL</sequence>